<comment type="function">
    <text evidence="1">Binds 23S rRNA and is also seen to make contacts with the A and possibly P site tRNAs.</text>
</comment>
<comment type="subunit">
    <text evidence="1">Part of the 50S ribosomal subunit.</text>
</comment>
<comment type="similarity">
    <text evidence="1">Belongs to the universal ribosomal protein uL16 family.</text>
</comment>
<name>RL16_CUPTR</name>
<accession>B3R7R6</accession>
<evidence type="ECO:0000255" key="1">
    <source>
        <dbReference type="HAMAP-Rule" id="MF_01342"/>
    </source>
</evidence>
<evidence type="ECO:0000256" key="2">
    <source>
        <dbReference type="SAM" id="MobiDB-lite"/>
    </source>
</evidence>
<evidence type="ECO:0000305" key="3"/>
<organism>
    <name type="scientific">Cupriavidus taiwanensis (strain DSM 17343 / BCRC 17206 / CCUG 44338 / CIP 107171 / LMG 19424 / R1)</name>
    <name type="common">Ralstonia taiwanensis (strain LMG 19424)</name>
    <dbReference type="NCBI Taxonomy" id="977880"/>
    <lineage>
        <taxon>Bacteria</taxon>
        <taxon>Pseudomonadati</taxon>
        <taxon>Pseudomonadota</taxon>
        <taxon>Betaproteobacteria</taxon>
        <taxon>Burkholderiales</taxon>
        <taxon>Burkholderiaceae</taxon>
        <taxon>Cupriavidus</taxon>
    </lineage>
</organism>
<sequence length="138" mass="15590">MLQPKRRKYRKEQKGRNTGKATRGNAVSFGEFGLKAMGRGRLTARQIESARRAMTRHIKRGGRIWIRIFPDKPISKKPAEVRMGNGKGNPEYYVAEIQPGKMLYEMDGVSEDLAREAFRLAAAKLPIATNFVVRQVGT</sequence>
<feature type="chain" id="PRO_1000142955" description="Large ribosomal subunit protein uL16">
    <location>
        <begin position="1"/>
        <end position="138"/>
    </location>
</feature>
<feature type="region of interest" description="Disordered" evidence="2">
    <location>
        <begin position="1"/>
        <end position="24"/>
    </location>
</feature>
<feature type="compositionally biased region" description="Basic residues" evidence="2">
    <location>
        <begin position="1"/>
        <end position="13"/>
    </location>
</feature>
<reference key="1">
    <citation type="journal article" date="2008" name="Genome Res.">
        <title>Genome sequence of the beta-rhizobium Cupriavidus taiwanensis and comparative genomics of rhizobia.</title>
        <authorList>
            <person name="Amadou C."/>
            <person name="Pascal G."/>
            <person name="Mangenot S."/>
            <person name="Glew M."/>
            <person name="Bontemps C."/>
            <person name="Capela D."/>
            <person name="Carrere S."/>
            <person name="Cruveiller S."/>
            <person name="Dossat C."/>
            <person name="Lajus A."/>
            <person name="Marchetti M."/>
            <person name="Poinsot V."/>
            <person name="Rouy Z."/>
            <person name="Servin B."/>
            <person name="Saad M."/>
            <person name="Schenowitz C."/>
            <person name="Barbe V."/>
            <person name="Batut J."/>
            <person name="Medigue C."/>
            <person name="Masson-Boivin C."/>
        </authorList>
    </citation>
    <scope>NUCLEOTIDE SEQUENCE [LARGE SCALE GENOMIC DNA]</scope>
    <source>
        <strain>DSM 17343 / BCRC 17206 / CCUG 44338 / CIP 107171 / LMG 19424 / R1</strain>
    </source>
</reference>
<gene>
    <name evidence="1" type="primary">rplP</name>
    <name type="ordered locus">RALTA_A2936</name>
</gene>
<protein>
    <recommendedName>
        <fullName evidence="1">Large ribosomal subunit protein uL16</fullName>
    </recommendedName>
    <alternativeName>
        <fullName evidence="3">50S ribosomal protein L16</fullName>
    </alternativeName>
</protein>
<keyword id="KW-0687">Ribonucleoprotein</keyword>
<keyword id="KW-0689">Ribosomal protein</keyword>
<keyword id="KW-0694">RNA-binding</keyword>
<keyword id="KW-0699">rRNA-binding</keyword>
<keyword id="KW-0820">tRNA-binding</keyword>
<proteinExistence type="inferred from homology"/>
<dbReference type="EMBL" id="CU633749">
    <property type="protein sequence ID" value="CAQ70861.1"/>
    <property type="molecule type" value="Genomic_DNA"/>
</dbReference>
<dbReference type="RefSeq" id="WP_010812391.1">
    <property type="nucleotide sequence ID" value="NC_010528.1"/>
</dbReference>
<dbReference type="SMR" id="B3R7R6"/>
<dbReference type="GeneID" id="29762805"/>
<dbReference type="KEGG" id="cti:RALTA_A2936"/>
<dbReference type="eggNOG" id="COG0197">
    <property type="taxonomic scope" value="Bacteria"/>
</dbReference>
<dbReference type="HOGENOM" id="CLU_078858_2_1_4"/>
<dbReference type="BioCyc" id="CTAI977880:RALTA_RS14320-MONOMER"/>
<dbReference type="Proteomes" id="UP000001692">
    <property type="component" value="Chromosome 1"/>
</dbReference>
<dbReference type="GO" id="GO:0022625">
    <property type="term" value="C:cytosolic large ribosomal subunit"/>
    <property type="evidence" value="ECO:0007669"/>
    <property type="project" value="TreeGrafter"/>
</dbReference>
<dbReference type="GO" id="GO:0019843">
    <property type="term" value="F:rRNA binding"/>
    <property type="evidence" value="ECO:0007669"/>
    <property type="project" value="UniProtKB-UniRule"/>
</dbReference>
<dbReference type="GO" id="GO:0003735">
    <property type="term" value="F:structural constituent of ribosome"/>
    <property type="evidence" value="ECO:0007669"/>
    <property type="project" value="InterPro"/>
</dbReference>
<dbReference type="GO" id="GO:0000049">
    <property type="term" value="F:tRNA binding"/>
    <property type="evidence" value="ECO:0007669"/>
    <property type="project" value="UniProtKB-KW"/>
</dbReference>
<dbReference type="GO" id="GO:0006412">
    <property type="term" value="P:translation"/>
    <property type="evidence" value="ECO:0007669"/>
    <property type="project" value="UniProtKB-UniRule"/>
</dbReference>
<dbReference type="CDD" id="cd01433">
    <property type="entry name" value="Ribosomal_L16_L10e"/>
    <property type="match status" value="1"/>
</dbReference>
<dbReference type="FunFam" id="3.90.1170.10:FF:000001">
    <property type="entry name" value="50S ribosomal protein L16"/>
    <property type="match status" value="1"/>
</dbReference>
<dbReference type="Gene3D" id="3.90.1170.10">
    <property type="entry name" value="Ribosomal protein L10e/L16"/>
    <property type="match status" value="1"/>
</dbReference>
<dbReference type="HAMAP" id="MF_01342">
    <property type="entry name" value="Ribosomal_uL16"/>
    <property type="match status" value="1"/>
</dbReference>
<dbReference type="InterPro" id="IPR047873">
    <property type="entry name" value="Ribosomal_uL16"/>
</dbReference>
<dbReference type="InterPro" id="IPR000114">
    <property type="entry name" value="Ribosomal_uL16_bact-type"/>
</dbReference>
<dbReference type="InterPro" id="IPR020798">
    <property type="entry name" value="Ribosomal_uL16_CS"/>
</dbReference>
<dbReference type="InterPro" id="IPR016180">
    <property type="entry name" value="Ribosomal_uL16_dom"/>
</dbReference>
<dbReference type="InterPro" id="IPR036920">
    <property type="entry name" value="Ribosomal_uL16_sf"/>
</dbReference>
<dbReference type="NCBIfam" id="TIGR01164">
    <property type="entry name" value="rplP_bact"/>
    <property type="match status" value="1"/>
</dbReference>
<dbReference type="PANTHER" id="PTHR12220">
    <property type="entry name" value="50S/60S RIBOSOMAL PROTEIN L16"/>
    <property type="match status" value="1"/>
</dbReference>
<dbReference type="PANTHER" id="PTHR12220:SF13">
    <property type="entry name" value="LARGE RIBOSOMAL SUBUNIT PROTEIN UL16M"/>
    <property type="match status" value="1"/>
</dbReference>
<dbReference type="Pfam" id="PF00252">
    <property type="entry name" value="Ribosomal_L16"/>
    <property type="match status" value="1"/>
</dbReference>
<dbReference type="PRINTS" id="PR00060">
    <property type="entry name" value="RIBOSOMALL16"/>
</dbReference>
<dbReference type="SUPFAM" id="SSF54686">
    <property type="entry name" value="Ribosomal protein L16p/L10e"/>
    <property type="match status" value="1"/>
</dbReference>
<dbReference type="PROSITE" id="PS00586">
    <property type="entry name" value="RIBOSOMAL_L16_1"/>
    <property type="match status" value="1"/>
</dbReference>